<feature type="chain" id="PRO_0000433426" description="Lipid droplet-associated hydrolase">
    <location>
        <begin position="1"/>
        <end position="307"/>
    </location>
</feature>
<feature type="transmembrane region" description="Helical" evidence="3">
    <location>
        <begin position="166"/>
        <end position="186"/>
    </location>
</feature>
<feature type="transmembrane region" description="Helical" evidence="3">
    <location>
        <begin position="188"/>
        <end position="208"/>
    </location>
</feature>
<feature type="region of interest" description="Potential amphipathic helix required for binding to lipid droplets" evidence="5 6">
    <location>
        <begin position="157"/>
        <end position="200"/>
    </location>
</feature>
<feature type="active site" description="Nucleophile" evidence="4">
    <location>
        <position position="119"/>
    </location>
</feature>
<feature type="active site" description="Charge relay system" evidence="2">
    <location>
        <position position="254"/>
    </location>
</feature>
<feature type="active site" description="Charge relay system" evidence="2">
    <location>
        <position position="283"/>
    </location>
</feature>
<accession>Q9W0H3</accession>
<comment type="function">
    <text evidence="1 5 6 7">Probable serine lipid hydrolase associated with lipid droplets (By similarity). Appears to lack or have very low cholesterol esterase activity (By similarity) (PubMed:27836991). Appears to lack triglyceride lipase activity (PubMed:23525007, PubMed:27836991). Involved in cholesterol and triglyceride homeostasis; stimulates cellular triglyceride accumulation and cellular cholesterol release (By similarity). Involved in negatively regulating juvenile hormone (JH) and possibly, insulin signaling activities such as triacylglycerols (TAG) storage, and thereby plays a role in the endocrine regulation of organismal growth and survival (PubMed:30917324). Likely functions by enhancing the activity of the JH hydrolase enzymes Jheh1 and Jheh2 (PubMed:30917324). Required for lipid droplet positioning and fat storage (PubMed:23525007).</text>
</comment>
<comment type="catalytic activity">
    <reaction evidence="1">
        <text>a cholesterol ester + H2O = cholesterol + a fatty acid + H(+)</text>
        <dbReference type="Rhea" id="RHEA:36403"/>
        <dbReference type="ChEBI" id="CHEBI:15377"/>
        <dbReference type="ChEBI" id="CHEBI:15378"/>
        <dbReference type="ChEBI" id="CHEBI:16113"/>
        <dbReference type="ChEBI" id="CHEBI:17002"/>
        <dbReference type="ChEBI" id="CHEBI:28868"/>
        <dbReference type="EC" id="3.1.1.13"/>
    </reaction>
    <physiologicalReaction direction="left-to-right" evidence="1">
        <dbReference type="Rhea" id="RHEA:36404"/>
    </physiologicalReaction>
</comment>
<comment type="subunit">
    <text evidence="7">Interacts with the juvenile hormone hydrolase enzymes Jheh1 and Jheh2 (PubMed:30917324). Also interacts with Hmu, Cpr, Gp93 and Pvr (PubMed:30917324).</text>
</comment>
<comment type="subcellular location">
    <subcellularLocation>
        <location evidence="5 6">Lipid droplet</location>
    </subcellularLocation>
    <subcellularLocation>
        <location evidence="5">Endoplasmic reticulum membrane</location>
        <topology evidence="3">Multi-pass membrane protein</topology>
    </subcellularLocation>
    <text evidence="5">Localizes to the endoplasmic reticulum in absence of lipid droplets and translocates to lipid droplets upon lipid storage induction.</text>
</comment>
<comment type="tissue specificity">
    <text evidence="7">Expressed in accessory glands.</text>
</comment>
<comment type="developmental stage">
    <text evidence="5">Expressed maternally and zygotically (PubMed:23525007). During embryonic stages 12-13, becomes restricted to the salivary glands (PubMed:23525007).</text>
</comment>
<comment type="disruption phenotype">
    <text evidence="7">Viable and fertile but displays phenotypes that appear to be the result of increased juvenile hormone (JH) and insulin/insulin-like growth factor (IIS) signaling (PubMed:30917324). For example, under nutritional stress shows reduced male survival, sensitivity toward oxidative stress, decreased locomotor activity, altered cuticular hydrocarbon (CHC) composition and desiccation protection, increased nuclear foxo levels and larvae are unable to adjust their developmental timing to their nutritional condition (PubMed:30917324). Six day old adults also display a significant reduction in triacylglycerol (TAG) storage levels (PubMed:30917324). In contrast, TAG levels in embryos and third-instar larvae are unaffected (PubMed:30917324).</text>
</comment>
<comment type="miscellaneous">
    <text evidence="7">'Sturkopf' means 'stubborn person' in German (PubMed:30917324). The name originates from mutant larvae which do not adjust their developmental timing to their nutritional conditions (PubMed:30917324).</text>
</comment>
<comment type="similarity">
    <text evidence="9">Belongs to the AB hydrolase superfamily. LDAH family.</text>
</comment>
<comment type="caution">
    <text evidence="1 5 6">The catalytic activity is unsure despite catalytic sites being conserved (PubMed:23525007, PubMed:27836991). Lacks cholesterol esterase activity when overexpressed in S2 cells (PubMed:27836991). The murine ortholog does have cholesterol esterase activity, although the activity is so low that it may be undetectable under certain experimental conditions or masked by other cellular cholesterol esterases (By similarity). Lacks lipolytic activity towards trioleoylglycerol, dioleoylglycerol or monooleoylglycerol when overexpressed in COS-7 cells or S2 cells (PubMed:23525007, PubMed:27836991).</text>
</comment>
<proteinExistence type="evidence at protein level"/>
<keyword id="KW-0256">Endoplasmic reticulum</keyword>
<keyword id="KW-0378">Hydrolase</keyword>
<keyword id="KW-0551">Lipid droplet</keyword>
<keyword id="KW-0472">Membrane</keyword>
<keyword id="KW-1185">Reference proteome</keyword>
<keyword id="KW-0812">Transmembrane</keyword>
<keyword id="KW-1133">Transmembrane helix</keyword>
<gene>
    <name evidence="8 10" type="primary">sturkopf</name>
    <name evidence="10" type="ORF">CG9186</name>
</gene>
<evidence type="ECO:0000250" key="1">
    <source>
        <dbReference type="UniProtKB" id="Q8BVA5"/>
    </source>
</evidence>
<evidence type="ECO:0000250" key="2">
    <source>
        <dbReference type="UniProtKB" id="Q9H6V9"/>
    </source>
</evidence>
<evidence type="ECO:0000255" key="3"/>
<evidence type="ECO:0000255" key="4">
    <source>
        <dbReference type="PROSITE-ProRule" id="PRU10037"/>
    </source>
</evidence>
<evidence type="ECO:0000269" key="5">
    <source>
    </source>
</evidence>
<evidence type="ECO:0000269" key="6">
    <source>
    </source>
</evidence>
<evidence type="ECO:0000269" key="7">
    <source>
    </source>
</evidence>
<evidence type="ECO:0000303" key="8">
    <source>
    </source>
</evidence>
<evidence type="ECO:0000305" key="9"/>
<evidence type="ECO:0000312" key="10">
    <source>
        <dbReference type="FlyBase" id="FBgn0035206"/>
    </source>
</evidence>
<sequence>MQEAYVNINSIPTHIFTWGRWIEETITEKEIVICITGNPGLPGFYTEFAGTLQKELGDLPVWVIGHAGHDDPPEASIREVPQLSGNEELFNLDGQIRHKIAFIEKYVPSDVKIHLIGHSIGAWMILQLLENERIRSRIQKCYMLFPTVERMMESPNGWVFTKVAMPLYSVFGYIFFSFFNFLPVWLRLMLIQIYFLIFSIPRQFLGTALKYSKPSVAEKVVFLADDEMARVRGIQREIVEQNLDLLKFYYGTTDGWVPISYYDQLKKDYPKVDAQLDTKKIDHAFVLRHSQPMAVIVRDMIQQHRRV</sequence>
<protein>
    <recommendedName>
        <fullName evidence="1">Lipid droplet-associated hydrolase</fullName>
        <ecNumber evidence="1">3.1.1.13</ecNumber>
    </recommendedName>
    <alternativeName>
        <fullName evidence="1">Lipid droplet-associated serine hydrolase</fullName>
    </alternativeName>
</protein>
<dbReference type="EC" id="3.1.1.13" evidence="1"/>
<dbReference type="EMBL" id="AE014296">
    <property type="protein sequence ID" value="AAF47473.1"/>
    <property type="molecule type" value="Genomic_DNA"/>
</dbReference>
<dbReference type="EMBL" id="AE014296">
    <property type="protein sequence ID" value="AAN11470.1"/>
    <property type="molecule type" value="Genomic_DNA"/>
</dbReference>
<dbReference type="EMBL" id="AY061530">
    <property type="protein sequence ID" value="AAL29078.1"/>
    <property type="molecule type" value="mRNA"/>
</dbReference>
<dbReference type="RefSeq" id="NP_612097.1">
    <property type="nucleotide sequence ID" value="NM_138253.2"/>
</dbReference>
<dbReference type="RefSeq" id="NP_728590.1">
    <property type="nucleotide sequence ID" value="NM_167867.2"/>
</dbReference>
<dbReference type="FunCoup" id="Q9W0H3">
    <property type="interactions" value="1503"/>
</dbReference>
<dbReference type="IntAct" id="Q9W0H3">
    <property type="interactions" value="2"/>
</dbReference>
<dbReference type="STRING" id="7227.FBpp0072611"/>
<dbReference type="ESTHER" id="drome-CG9186">
    <property type="family name" value="LIDHydrolase"/>
</dbReference>
<dbReference type="PaxDb" id="7227-FBpp0072611"/>
<dbReference type="DNASU" id="38150"/>
<dbReference type="EnsemblMetazoa" id="FBtr0072727">
    <property type="protein sequence ID" value="FBpp0072611"/>
    <property type="gene ID" value="FBgn0035206"/>
</dbReference>
<dbReference type="EnsemblMetazoa" id="FBtr0072728">
    <property type="protein sequence ID" value="FBpp0072612"/>
    <property type="gene ID" value="FBgn0035206"/>
</dbReference>
<dbReference type="GeneID" id="38150"/>
<dbReference type="KEGG" id="dme:Dmel_CG9186"/>
<dbReference type="UCSC" id="CG9186-RA">
    <property type="organism name" value="d. melanogaster"/>
</dbReference>
<dbReference type="AGR" id="FB:FBgn0035206"/>
<dbReference type="CTD" id="38150"/>
<dbReference type="FlyBase" id="FBgn0035206">
    <property type="gene designation" value="sturkopf"/>
</dbReference>
<dbReference type="VEuPathDB" id="VectorBase:FBgn0035206"/>
<dbReference type="eggNOG" id="KOG3975">
    <property type="taxonomic scope" value="Eukaryota"/>
</dbReference>
<dbReference type="GeneTree" id="ENSGT00390000009688"/>
<dbReference type="HOGENOM" id="CLU_018394_2_1_1"/>
<dbReference type="InParanoid" id="Q9W0H3"/>
<dbReference type="OMA" id="WVPVSYY"/>
<dbReference type="OrthoDB" id="448051at2759"/>
<dbReference type="PhylomeDB" id="Q9W0H3"/>
<dbReference type="BioGRID-ORCS" id="38150">
    <property type="hits" value="0 hits in 1 CRISPR screen"/>
</dbReference>
<dbReference type="GenomeRNAi" id="38150"/>
<dbReference type="PRO" id="PR:Q9W0H3"/>
<dbReference type="Proteomes" id="UP000000803">
    <property type="component" value="Chromosome 3L"/>
</dbReference>
<dbReference type="Bgee" id="FBgn0035206">
    <property type="expression patterns" value="Expressed in adult Malpighian tubule principal cell of lower segment in Malpighian tubule and 174 other cell types or tissues"/>
</dbReference>
<dbReference type="GO" id="GO:0012505">
    <property type="term" value="C:endomembrane system"/>
    <property type="evidence" value="ECO:0007005"/>
    <property type="project" value="FlyBase"/>
</dbReference>
<dbReference type="GO" id="GO:0005783">
    <property type="term" value="C:endoplasmic reticulum"/>
    <property type="evidence" value="ECO:0000314"/>
    <property type="project" value="FlyBase"/>
</dbReference>
<dbReference type="GO" id="GO:0005789">
    <property type="term" value="C:endoplasmic reticulum membrane"/>
    <property type="evidence" value="ECO:0007669"/>
    <property type="project" value="UniProtKB-SubCell"/>
</dbReference>
<dbReference type="GO" id="GO:0005811">
    <property type="term" value="C:lipid droplet"/>
    <property type="evidence" value="ECO:0000314"/>
    <property type="project" value="FlyBase"/>
</dbReference>
<dbReference type="GO" id="GO:0016298">
    <property type="term" value="F:lipase activity"/>
    <property type="evidence" value="ECO:0007669"/>
    <property type="project" value="InterPro"/>
</dbReference>
<dbReference type="GO" id="GO:0017171">
    <property type="term" value="F:serine hydrolase activity"/>
    <property type="evidence" value="ECO:0007005"/>
    <property type="project" value="FlyBase"/>
</dbReference>
<dbReference type="GO" id="GO:0034389">
    <property type="term" value="P:lipid droplet organization"/>
    <property type="evidence" value="ECO:0000315"/>
    <property type="project" value="FlyBase"/>
</dbReference>
<dbReference type="GO" id="GO:0019915">
    <property type="term" value="P:lipid storage"/>
    <property type="evidence" value="ECO:0000318"/>
    <property type="project" value="GO_Central"/>
</dbReference>
<dbReference type="GO" id="GO:0045928">
    <property type="term" value="P:negative regulation of juvenile hormone metabolic process"/>
    <property type="evidence" value="ECO:0000314"/>
    <property type="project" value="UniProtKB"/>
</dbReference>
<dbReference type="GO" id="GO:0010883">
    <property type="term" value="P:regulation of lipid storage"/>
    <property type="evidence" value="ECO:0000315"/>
    <property type="project" value="FlyBase"/>
</dbReference>
<dbReference type="GO" id="GO:0030730">
    <property type="term" value="P:triglyceride storage"/>
    <property type="evidence" value="ECO:0000315"/>
    <property type="project" value="FlyBase"/>
</dbReference>
<dbReference type="FunFam" id="3.40.50.1820:FF:000068">
    <property type="entry name" value="Lipid droplet associated hydrolase"/>
    <property type="match status" value="1"/>
</dbReference>
<dbReference type="Gene3D" id="3.40.50.1820">
    <property type="entry name" value="alpha/beta hydrolase"/>
    <property type="match status" value="1"/>
</dbReference>
<dbReference type="InterPro" id="IPR029058">
    <property type="entry name" value="AB_hydrolase_fold"/>
</dbReference>
<dbReference type="InterPro" id="IPR019363">
    <property type="entry name" value="LDAH"/>
</dbReference>
<dbReference type="PANTHER" id="PTHR13390">
    <property type="entry name" value="LIPASE"/>
    <property type="match status" value="1"/>
</dbReference>
<dbReference type="PANTHER" id="PTHR13390:SF0">
    <property type="entry name" value="LIPID DROPLET-ASSOCIATED HYDROLASE"/>
    <property type="match status" value="1"/>
</dbReference>
<dbReference type="Pfam" id="PF10230">
    <property type="entry name" value="LIDHydrolase"/>
    <property type="match status" value="1"/>
</dbReference>
<dbReference type="SUPFAM" id="SSF53474">
    <property type="entry name" value="alpha/beta-Hydrolases"/>
    <property type="match status" value="1"/>
</dbReference>
<dbReference type="PROSITE" id="PS00120">
    <property type="entry name" value="LIPASE_SER"/>
    <property type="match status" value="1"/>
</dbReference>
<name>LDAH_DROME</name>
<reference key="1">
    <citation type="journal article" date="2000" name="Science">
        <title>The genome sequence of Drosophila melanogaster.</title>
        <authorList>
            <person name="Adams M.D."/>
            <person name="Celniker S.E."/>
            <person name="Holt R.A."/>
            <person name="Evans C.A."/>
            <person name="Gocayne J.D."/>
            <person name="Amanatides P.G."/>
            <person name="Scherer S.E."/>
            <person name="Li P.W."/>
            <person name="Hoskins R.A."/>
            <person name="Galle R.F."/>
            <person name="George R.A."/>
            <person name="Lewis S.E."/>
            <person name="Richards S."/>
            <person name="Ashburner M."/>
            <person name="Henderson S.N."/>
            <person name="Sutton G.G."/>
            <person name="Wortman J.R."/>
            <person name="Yandell M.D."/>
            <person name="Zhang Q."/>
            <person name="Chen L.X."/>
            <person name="Brandon R.C."/>
            <person name="Rogers Y.-H.C."/>
            <person name="Blazej R.G."/>
            <person name="Champe M."/>
            <person name="Pfeiffer B.D."/>
            <person name="Wan K.H."/>
            <person name="Doyle C."/>
            <person name="Baxter E.G."/>
            <person name="Helt G."/>
            <person name="Nelson C.R."/>
            <person name="Miklos G.L.G."/>
            <person name="Abril J.F."/>
            <person name="Agbayani A."/>
            <person name="An H.-J."/>
            <person name="Andrews-Pfannkoch C."/>
            <person name="Baldwin D."/>
            <person name="Ballew R.M."/>
            <person name="Basu A."/>
            <person name="Baxendale J."/>
            <person name="Bayraktaroglu L."/>
            <person name="Beasley E.M."/>
            <person name="Beeson K.Y."/>
            <person name="Benos P.V."/>
            <person name="Berman B.P."/>
            <person name="Bhandari D."/>
            <person name="Bolshakov S."/>
            <person name="Borkova D."/>
            <person name="Botchan M.R."/>
            <person name="Bouck J."/>
            <person name="Brokstein P."/>
            <person name="Brottier P."/>
            <person name="Burtis K.C."/>
            <person name="Busam D.A."/>
            <person name="Butler H."/>
            <person name="Cadieu E."/>
            <person name="Center A."/>
            <person name="Chandra I."/>
            <person name="Cherry J.M."/>
            <person name="Cawley S."/>
            <person name="Dahlke C."/>
            <person name="Davenport L.B."/>
            <person name="Davies P."/>
            <person name="de Pablos B."/>
            <person name="Delcher A."/>
            <person name="Deng Z."/>
            <person name="Mays A.D."/>
            <person name="Dew I."/>
            <person name="Dietz S.M."/>
            <person name="Dodson K."/>
            <person name="Doup L.E."/>
            <person name="Downes M."/>
            <person name="Dugan-Rocha S."/>
            <person name="Dunkov B.C."/>
            <person name="Dunn P."/>
            <person name="Durbin K.J."/>
            <person name="Evangelista C.C."/>
            <person name="Ferraz C."/>
            <person name="Ferriera S."/>
            <person name="Fleischmann W."/>
            <person name="Fosler C."/>
            <person name="Gabrielian A.E."/>
            <person name="Garg N.S."/>
            <person name="Gelbart W.M."/>
            <person name="Glasser K."/>
            <person name="Glodek A."/>
            <person name="Gong F."/>
            <person name="Gorrell J.H."/>
            <person name="Gu Z."/>
            <person name="Guan P."/>
            <person name="Harris M."/>
            <person name="Harris N.L."/>
            <person name="Harvey D.A."/>
            <person name="Heiman T.J."/>
            <person name="Hernandez J.R."/>
            <person name="Houck J."/>
            <person name="Hostin D."/>
            <person name="Houston K.A."/>
            <person name="Howland T.J."/>
            <person name="Wei M.-H."/>
            <person name="Ibegwam C."/>
            <person name="Jalali M."/>
            <person name="Kalush F."/>
            <person name="Karpen G.H."/>
            <person name="Ke Z."/>
            <person name="Kennison J.A."/>
            <person name="Ketchum K.A."/>
            <person name="Kimmel B.E."/>
            <person name="Kodira C.D."/>
            <person name="Kraft C.L."/>
            <person name="Kravitz S."/>
            <person name="Kulp D."/>
            <person name="Lai Z."/>
            <person name="Lasko P."/>
            <person name="Lei Y."/>
            <person name="Levitsky A.A."/>
            <person name="Li J.H."/>
            <person name="Li Z."/>
            <person name="Liang Y."/>
            <person name="Lin X."/>
            <person name="Liu X."/>
            <person name="Mattei B."/>
            <person name="McIntosh T.C."/>
            <person name="McLeod M.P."/>
            <person name="McPherson D."/>
            <person name="Merkulov G."/>
            <person name="Milshina N.V."/>
            <person name="Mobarry C."/>
            <person name="Morris J."/>
            <person name="Moshrefi A."/>
            <person name="Mount S.M."/>
            <person name="Moy M."/>
            <person name="Murphy B."/>
            <person name="Murphy L."/>
            <person name="Muzny D.M."/>
            <person name="Nelson D.L."/>
            <person name="Nelson D.R."/>
            <person name="Nelson K.A."/>
            <person name="Nixon K."/>
            <person name="Nusskern D.R."/>
            <person name="Pacleb J.M."/>
            <person name="Palazzolo M."/>
            <person name="Pittman G.S."/>
            <person name="Pan S."/>
            <person name="Pollard J."/>
            <person name="Puri V."/>
            <person name="Reese M.G."/>
            <person name="Reinert K."/>
            <person name="Remington K."/>
            <person name="Saunders R.D.C."/>
            <person name="Scheeler F."/>
            <person name="Shen H."/>
            <person name="Shue B.C."/>
            <person name="Siden-Kiamos I."/>
            <person name="Simpson M."/>
            <person name="Skupski M.P."/>
            <person name="Smith T.J."/>
            <person name="Spier E."/>
            <person name="Spradling A.C."/>
            <person name="Stapleton M."/>
            <person name="Strong R."/>
            <person name="Sun E."/>
            <person name="Svirskas R."/>
            <person name="Tector C."/>
            <person name="Turner R."/>
            <person name="Venter E."/>
            <person name="Wang A.H."/>
            <person name="Wang X."/>
            <person name="Wang Z.-Y."/>
            <person name="Wassarman D.A."/>
            <person name="Weinstock G.M."/>
            <person name="Weissenbach J."/>
            <person name="Williams S.M."/>
            <person name="Woodage T."/>
            <person name="Worley K.C."/>
            <person name="Wu D."/>
            <person name="Yang S."/>
            <person name="Yao Q.A."/>
            <person name="Ye J."/>
            <person name="Yeh R.-F."/>
            <person name="Zaveri J.S."/>
            <person name="Zhan M."/>
            <person name="Zhang G."/>
            <person name="Zhao Q."/>
            <person name="Zheng L."/>
            <person name="Zheng X.H."/>
            <person name="Zhong F.N."/>
            <person name="Zhong W."/>
            <person name="Zhou X."/>
            <person name="Zhu S.C."/>
            <person name="Zhu X."/>
            <person name="Smith H.O."/>
            <person name="Gibbs R.A."/>
            <person name="Myers E.W."/>
            <person name="Rubin G.M."/>
            <person name="Venter J.C."/>
        </authorList>
    </citation>
    <scope>NUCLEOTIDE SEQUENCE [LARGE SCALE GENOMIC DNA]</scope>
    <source>
        <strain>Berkeley</strain>
    </source>
</reference>
<reference key="2">
    <citation type="journal article" date="2002" name="Genome Biol.">
        <title>Annotation of the Drosophila melanogaster euchromatic genome: a systematic review.</title>
        <authorList>
            <person name="Misra S."/>
            <person name="Crosby M.A."/>
            <person name="Mungall C.J."/>
            <person name="Matthews B.B."/>
            <person name="Campbell K.S."/>
            <person name="Hradecky P."/>
            <person name="Huang Y."/>
            <person name="Kaminker J.S."/>
            <person name="Millburn G.H."/>
            <person name="Prochnik S.E."/>
            <person name="Smith C.D."/>
            <person name="Tupy J.L."/>
            <person name="Whitfield E.J."/>
            <person name="Bayraktaroglu L."/>
            <person name="Berman B.P."/>
            <person name="Bettencourt B.R."/>
            <person name="Celniker S.E."/>
            <person name="de Grey A.D.N.J."/>
            <person name="Drysdale R.A."/>
            <person name="Harris N.L."/>
            <person name="Richter J."/>
            <person name="Russo S."/>
            <person name="Schroeder A.J."/>
            <person name="Shu S.Q."/>
            <person name="Stapleton M."/>
            <person name="Yamada C."/>
            <person name="Ashburner M."/>
            <person name="Gelbart W.M."/>
            <person name="Rubin G.M."/>
            <person name="Lewis S.E."/>
        </authorList>
    </citation>
    <scope>GENOME REANNOTATION</scope>
    <source>
        <strain>Berkeley</strain>
    </source>
</reference>
<reference key="3">
    <citation type="journal article" date="2002" name="Genome Biol.">
        <title>A Drosophila full-length cDNA resource.</title>
        <authorList>
            <person name="Stapleton M."/>
            <person name="Carlson J.W."/>
            <person name="Brokstein P."/>
            <person name="Yu C."/>
            <person name="Champe M."/>
            <person name="George R.A."/>
            <person name="Guarin H."/>
            <person name="Kronmiller B."/>
            <person name="Pacleb J.M."/>
            <person name="Park S."/>
            <person name="Wan K.H."/>
            <person name="Rubin G.M."/>
            <person name="Celniker S.E."/>
        </authorList>
    </citation>
    <scope>NUCLEOTIDE SEQUENCE [LARGE SCALE MRNA]</scope>
    <source>
        <strain>Berkeley</strain>
        <tissue>Larva</tissue>
        <tissue>Pupae</tissue>
    </source>
</reference>
<reference key="4">
    <citation type="journal article" date="2013" name="J. Cell Sci.">
        <title>The evolutionarily conserved protein CG9186 is associated with lipid droplets, required for their positioning and for fat storage.</title>
        <authorList>
            <person name="Thiel K."/>
            <person name="Heier C."/>
            <person name="Haberl V."/>
            <person name="Thul P.J."/>
            <person name="Oberer M."/>
            <person name="Lass A."/>
            <person name="Jackle H."/>
            <person name="Beller M."/>
        </authorList>
    </citation>
    <scope>FUNCTION</scope>
    <scope>SUBCELLULAR LOCATION</scope>
    <scope>TISSUE SPECIFICITY</scope>
    <scope>DEVELOPMENTAL STAGE</scope>
</reference>
<reference key="5">
    <citation type="journal article" date="2017" name="J. Lipid Res.">
        <title>Mice lacking lipid droplet-associated hydrolase, a gene linked to human prostate cancer, have normal cholesterol ester metabolism.</title>
        <authorList>
            <person name="Kory N."/>
            <person name="Grond S."/>
            <person name="Kamat S.S."/>
            <person name="Li Z."/>
            <person name="Krahmer N."/>
            <person name="Chitraju C."/>
            <person name="Zhou P."/>
            <person name="Froehlich F."/>
            <person name="Semova I."/>
            <person name="Ejsing C."/>
            <person name="Zechner R."/>
            <person name="Cravatt B.F."/>
            <person name="Farese R.V. Jr."/>
            <person name="Walther T.C."/>
        </authorList>
    </citation>
    <scope>FUNCTION</scope>
    <scope>SUBCELLULAR LOCATION</scope>
</reference>
<reference key="6">
    <citation type="journal article" date="2019" name="Cell Rep.">
        <title>Control of Drosophila Growth and Survival by the Lipid Droplet-Associated Protein CG9186/Sturkopf.</title>
        <authorList>
            <person name="Werthebach M."/>
            <person name="Stewart F.A."/>
            <person name="Gahlen A."/>
            <person name="Mettler-Altmann T."/>
            <person name="Akhtar I."/>
            <person name="Maas-Enriquez K."/>
            <person name="Droste A."/>
            <person name="Eichmann T.O."/>
            <person name="Poschmann G."/>
            <person name="Stuehler K."/>
            <person name="Beller M."/>
        </authorList>
    </citation>
    <scope>FUNCTION</scope>
    <scope>INTERACTION WITH HMU</scope>
    <scope>CPR</scope>
    <scope>GP93</scope>
    <scope>PVR</scope>
    <scope>JHEH1 AND JHEH2</scope>
    <scope>TISSUE SPECIFICITY</scope>
    <scope>DISRUPTION PHENOTYPE</scope>
</reference>
<organism>
    <name type="scientific">Drosophila melanogaster</name>
    <name type="common">Fruit fly</name>
    <dbReference type="NCBI Taxonomy" id="7227"/>
    <lineage>
        <taxon>Eukaryota</taxon>
        <taxon>Metazoa</taxon>
        <taxon>Ecdysozoa</taxon>
        <taxon>Arthropoda</taxon>
        <taxon>Hexapoda</taxon>
        <taxon>Insecta</taxon>
        <taxon>Pterygota</taxon>
        <taxon>Neoptera</taxon>
        <taxon>Endopterygota</taxon>
        <taxon>Diptera</taxon>
        <taxon>Brachycera</taxon>
        <taxon>Muscomorpha</taxon>
        <taxon>Ephydroidea</taxon>
        <taxon>Drosophilidae</taxon>
        <taxon>Drosophila</taxon>
        <taxon>Sophophora</taxon>
    </lineage>
</organism>